<sequence length="1418" mass="160414">MISPTHQSQYLNYFVNPVLMTESGDIIDSVTGTTTTTANMSNTTIDAPTPASTTKNYKHKKQNTNTGTSMSPSNSINSTNNNAAAAAATTTTSKKSKDIPLELTAFGTTPSGKPRLFVCQVCTRAFARLEHLRRHERSHTKEKPFSCGVCQRKFSRRDLLLRHAQKLHAGCTDAITRLRRKSIKKSQDGDDDDDDDDDDEEMANSEDENDHDESGNASTKNGKKDKKDPPPEFNLNLFNSKQKPTKANTTKSKVAKLSTTTSRKNSTNPTRKNSSSLHKQVLDQRQKAAVNTKIVSSTKIVSGTNSGVSITPTRSRRGASFSAQSGANYAINIPEFNDIYPQSDNVEFSTPQFLPSSLDNEMTWLNNIPNIPGLSDSVSAANLMRQNSITNSADHVTPPVNVSQHGSFSHQSTFSATDMGQTRSESVNSLNTPFDGSYMMPTVTISNQEIQNGVAAHHHHQQQQQHQQHNHQHQPNQSSLGLSRNDMLSEDHYGYSFYDIPENILNFPMDSISTTSNAMSSGPIQNFKPLSPITQEIEHEITPRIDGRIGDFQNNNNTNDNPIHQNINYDLNFLHTIDDIGQDVISKFMPGGYSFYGDNNVSATSSANDYNSPNNIVSPSQQNNQFALHNQSSHPSGASPHLNQAMMNKMRLHNYSSNKLFTNHIRHMINKALGKYPISGIMTPTIPSNEKLEFYLSVFIQSFLAHLPFIHPSKLNEYEIMAMTGNEDINNESARVCLPLLTATMGALLANNKNDAEHLYEASRRTIHIYLESRKTNSTNDKNYKNGKDKSSSGNPLWLLQSLMLSVLYGLFSDNENNVYIVIRQLNALNSLVKTSIKNKGPIFFSNNGEDEELYNKLNSHDNGTSLFSNNLNDEMRYKNNINMQSQTRIVFIIYRLTNFLLMMYNVPLTFSINDINQLAVTSKDEETLWNFKNYQEFQEFSHKNNKTLDDYLNHKNEPIIFRELLLTVIKFGISDSNISPEIEKKVTHQLQNLCKYGFNCLVHGIYEIKQYQEMKEVDTFKVLDYLTKFYPTNDGLGFNCFRLPANKDLEKIDYALLVDFTKISSIIDLKLLKEQSWLKNYQDLTQNYHRLLDAHSTGNPLNSINDYDYLKLADCCISVLKLILFKVEDSNSNSRNRSKNDPTNEINNKLNNNNNNNNDMNNNNSNGDQLISAFDTDFGYLNMDNNGYAKKEEFSRFTDDELRYDKENTMSYFDKHIKLDIFEEVEKSSNLIQAQMLFHAFSVLSIFSVYVMRKNDNNSSPFANTDLIFELNHRYSMVLRLLERLETFLKLRYQTSAGGGGGGVNNNNNNALSIKLEQEFTNLYLYNGNVLSSDHNTNTNTTNTITTTTTTDNGTKQNQHHSQDFGLEKTLYILKMGENVLNYIYDLNLKVCVFKKLGDSLSEIRKYLIDNESTLNG</sequence>
<feature type="chain" id="PRO_0000426051" description="Transcriptional regulator ADR1">
    <location>
        <begin position="1"/>
        <end position="1418"/>
    </location>
</feature>
<feature type="zinc finger region" description="C2H2-type 1" evidence="2">
    <location>
        <begin position="117"/>
        <end position="139"/>
    </location>
</feature>
<feature type="zinc finger region" description="C2H2-type 2" evidence="2">
    <location>
        <begin position="145"/>
        <end position="168"/>
    </location>
</feature>
<feature type="region of interest" description="Disordered" evidence="3">
    <location>
        <begin position="34"/>
        <end position="96"/>
    </location>
</feature>
<feature type="region of interest" description="Disordered" evidence="3">
    <location>
        <begin position="181"/>
        <end position="285"/>
    </location>
</feature>
<feature type="region of interest" description="Disordered" evidence="3">
    <location>
        <begin position="403"/>
        <end position="426"/>
    </location>
</feature>
<feature type="region of interest" description="Disordered" evidence="3">
    <location>
        <begin position="454"/>
        <end position="484"/>
    </location>
</feature>
<feature type="region of interest" description="Disordered" evidence="3">
    <location>
        <begin position="1132"/>
        <end position="1167"/>
    </location>
</feature>
<feature type="region of interest" description="Disordered" evidence="3">
    <location>
        <begin position="1338"/>
        <end position="1362"/>
    </location>
</feature>
<feature type="compositionally biased region" description="Low complexity" evidence="3">
    <location>
        <begin position="34"/>
        <end position="44"/>
    </location>
</feature>
<feature type="compositionally biased region" description="Low complexity" evidence="3">
    <location>
        <begin position="68"/>
        <end position="93"/>
    </location>
</feature>
<feature type="compositionally biased region" description="Acidic residues" evidence="3">
    <location>
        <begin position="189"/>
        <end position="211"/>
    </location>
</feature>
<feature type="compositionally biased region" description="Polar residues" evidence="3">
    <location>
        <begin position="236"/>
        <end position="278"/>
    </location>
</feature>
<feature type="compositionally biased region" description="Low complexity" evidence="3">
    <location>
        <begin position="462"/>
        <end position="477"/>
    </location>
</feature>
<feature type="compositionally biased region" description="Low complexity" evidence="3">
    <location>
        <begin position="1145"/>
        <end position="1167"/>
    </location>
</feature>
<feature type="compositionally biased region" description="Low complexity" evidence="3">
    <location>
        <begin position="1338"/>
        <end position="1356"/>
    </location>
</feature>
<organism>
    <name type="scientific">Candida albicans (strain SC5314 / ATCC MYA-2876)</name>
    <name type="common">Yeast</name>
    <dbReference type="NCBI Taxonomy" id="237561"/>
    <lineage>
        <taxon>Eukaryota</taxon>
        <taxon>Fungi</taxon>
        <taxon>Dikarya</taxon>
        <taxon>Ascomycota</taxon>
        <taxon>Saccharomycotina</taxon>
        <taxon>Pichiomycetes</taxon>
        <taxon>Debaryomycetaceae</taxon>
        <taxon>Candida/Lodderomyces clade</taxon>
        <taxon>Candida</taxon>
    </lineage>
</organism>
<name>ADR1_CANAL</name>
<protein>
    <recommendedName>
        <fullName>Transcriptional regulator ADR1</fullName>
    </recommendedName>
</protein>
<reference key="1">
    <citation type="journal article" date="2004" name="Proc. Natl. Acad. Sci. U.S.A.">
        <title>The diploid genome sequence of Candida albicans.</title>
        <authorList>
            <person name="Jones T."/>
            <person name="Federspiel N.A."/>
            <person name="Chibana H."/>
            <person name="Dungan J."/>
            <person name="Kalman S."/>
            <person name="Magee B.B."/>
            <person name="Newport G."/>
            <person name="Thorstenson Y.R."/>
            <person name="Agabian N."/>
            <person name="Magee P.T."/>
            <person name="Davis R.W."/>
            <person name="Scherer S."/>
        </authorList>
    </citation>
    <scope>NUCLEOTIDE SEQUENCE [LARGE SCALE GENOMIC DNA]</scope>
    <source>
        <strain>SC5314 / ATCC MYA-2876</strain>
    </source>
</reference>
<reference key="2">
    <citation type="journal article" date="2007" name="Genome Biol.">
        <title>Assembly of the Candida albicans genome into sixteen supercontigs aligned on the eight chromosomes.</title>
        <authorList>
            <person name="van het Hoog M."/>
            <person name="Rast T.J."/>
            <person name="Martchenko M."/>
            <person name="Grindle S."/>
            <person name="Dignard D."/>
            <person name="Hogues H."/>
            <person name="Cuomo C."/>
            <person name="Berriman M."/>
            <person name="Scherer S."/>
            <person name="Magee B.B."/>
            <person name="Whiteway M."/>
            <person name="Chibana H."/>
            <person name="Nantel A."/>
            <person name="Magee P.T."/>
        </authorList>
    </citation>
    <scope>GENOME REANNOTATION</scope>
    <source>
        <strain>SC5314 / ATCC MYA-2876</strain>
    </source>
</reference>
<reference key="3">
    <citation type="journal article" date="2013" name="Genome Biol.">
        <title>Assembly of a phased diploid Candida albicans genome facilitates allele-specific measurements and provides a simple model for repeat and indel structure.</title>
        <authorList>
            <person name="Muzzey D."/>
            <person name="Schwartz K."/>
            <person name="Weissman J.S."/>
            <person name="Sherlock G."/>
        </authorList>
    </citation>
    <scope>NUCLEOTIDE SEQUENCE [LARGE SCALE GENOMIC DNA]</scope>
    <scope>GENOME REANNOTATION</scope>
    <source>
        <strain>SC5314 / ATCC MYA-2876</strain>
    </source>
</reference>
<reference key="4">
    <citation type="journal article" date="2003" name="EMBO J.">
        <title>Haploinsufficiency-based large-scale forward genetic analysis of filamentous growth in the diploid human fungal pathogen C.albicans.</title>
        <authorList>
            <person name="Uhl M.A."/>
            <person name="Biery M."/>
            <person name="Craig N."/>
            <person name="Johnson A.D."/>
        </authorList>
    </citation>
    <scope>DISRUPTION PHENOTYPE</scope>
    <scope>FUNCTION</scope>
</reference>
<reference key="5">
    <citation type="journal article" date="2009" name="Eukaryot. Cell">
        <title>The transcription factor homolog CTF1 regulates {beta}-oxidation in Candida albicans.</title>
        <authorList>
            <person name="Ramirez M.A."/>
            <person name="Lorenz M.C."/>
        </authorList>
    </citation>
    <scope>IDENTIFICATION</scope>
</reference>
<reference key="6">
    <citation type="journal article" date="2012" name="Cell">
        <title>A recently evolved transcriptional network controls biofilm development in Candida albicans.</title>
        <authorList>
            <person name="Nobile C.J."/>
            <person name="Fox E.P."/>
            <person name="Nett J.E."/>
            <person name="Sorrells T.R."/>
            <person name="Mitrovich Q.M."/>
            <person name="Hernday A.D."/>
            <person name="Tuch B.B."/>
            <person name="Andes D.R."/>
            <person name="Johnson A.D."/>
        </authorList>
    </citation>
    <scope>INDUCTION</scope>
</reference>
<gene>
    <name type="primary">ADR1</name>
    <name type="ordered locus">CAALFM_C402500CA</name>
    <name type="ORF">CaO19.10266</name>
    <name type="ORF">CaO19.2752</name>
</gene>
<comment type="function">
    <text evidence="4">Transcription factor involved in the regulation of hyphal growth.</text>
</comment>
<comment type="subcellular location">
    <subcellularLocation>
        <location evidence="1">Nucleus</location>
    </subcellularLocation>
</comment>
<comment type="induction">
    <text evidence="5">Expression is increased in biofilm.</text>
</comment>
<comment type="disruption phenotype">
    <text evidence="4">Affects filamentous growth.</text>
</comment>
<comment type="miscellaneous">
    <text evidence="6">Targets a different set of genes than S.cerevisiae ADR1.</text>
</comment>
<dbReference type="EMBL" id="CP017626">
    <property type="protein sequence ID" value="AOW29019.1"/>
    <property type="molecule type" value="Genomic_DNA"/>
</dbReference>
<dbReference type="RefSeq" id="XP_720502.2">
    <property type="nucleotide sequence ID" value="XM_715409.2"/>
</dbReference>
<dbReference type="SMR" id="Q5AF56"/>
<dbReference type="BioGRID" id="1220960">
    <property type="interactions" value="1"/>
</dbReference>
<dbReference type="FunCoup" id="Q5AF56">
    <property type="interactions" value="888"/>
</dbReference>
<dbReference type="STRING" id="237561.Q5AF56"/>
<dbReference type="EnsemblFungi" id="C4_02500C_A-T">
    <property type="protein sequence ID" value="C4_02500C_A-T-p1"/>
    <property type="gene ID" value="C4_02500C_A"/>
</dbReference>
<dbReference type="GeneID" id="3637866"/>
<dbReference type="KEGG" id="cal:CAALFM_C402500CA"/>
<dbReference type="CGD" id="CAL0000189036">
    <property type="gene designation" value="ADR1"/>
</dbReference>
<dbReference type="VEuPathDB" id="FungiDB:C4_02500C_A"/>
<dbReference type="eggNOG" id="KOG1721">
    <property type="taxonomic scope" value="Eukaryota"/>
</dbReference>
<dbReference type="HOGENOM" id="CLU_007571_0_0_1"/>
<dbReference type="InParanoid" id="Q5AF56"/>
<dbReference type="OrthoDB" id="10018191at2759"/>
<dbReference type="PRO" id="PR:Q5AF56"/>
<dbReference type="Proteomes" id="UP000000559">
    <property type="component" value="Chromosome 4"/>
</dbReference>
<dbReference type="GO" id="GO:0000785">
    <property type="term" value="C:chromatin"/>
    <property type="evidence" value="ECO:0000318"/>
    <property type="project" value="GO_Central"/>
</dbReference>
<dbReference type="GO" id="GO:0005634">
    <property type="term" value="C:nucleus"/>
    <property type="evidence" value="ECO:0007669"/>
    <property type="project" value="UniProtKB-SubCell"/>
</dbReference>
<dbReference type="GO" id="GO:0001216">
    <property type="term" value="F:DNA-binding transcription activator activity"/>
    <property type="evidence" value="ECO:0000314"/>
    <property type="project" value="CGD"/>
</dbReference>
<dbReference type="GO" id="GO:0000981">
    <property type="term" value="F:DNA-binding transcription factor activity, RNA polymerase II-specific"/>
    <property type="evidence" value="ECO:0000318"/>
    <property type="project" value="GO_Central"/>
</dbReference>
<dbReference type="GO" id="GO:0000978">
    <property type="term" value="F:RNA polymerase II cis-regulatory region sequence-specific DNA binding"/>
    <property type="evidence" value="ECO:0000318"/>
    <property type="project" value="GO_Central"/>
</dbReference>
<dbReference type="GO" id="GO:0008270">
    <property type="term" value="F:zinc ion binding"/>
    <property type="evidence" value="ECO:0007669"/>
    <property type="project" value="UniProtKB-KW"/>
</dbReference>
<dbReference type="GO" id="GO:0009267">
    <property type="term" value="P:cellular response to starvation"/>
    <property type="evidence" value="ECO:0000315"/>
    <property type="project" value="CGD"/>
</dbReference>
<dbReference type="GO" id="GO:0006696">
    <property type="term" value="P:ergosterol biosynthetic process"/>
    <property type="evidence" value="ECO:0000314"/>
    <property type="project" value="CGD"/>
</dbReference>
<dbReference type="GO" id="GO:0030447">
    <property type="term" value="P:filamentous growth"/>
    <property type="evidence" value="ECO:0000315"/>
    <property type="project" value="CGD"/>
</dbReference>
<dbReference type="GO" id="GO:0036180">
    <property type="term" value="P:filamentous growth of a population of unicellular organisms in response to biotic stimulus"/>
    <property type="evidence" value="ECO:0000315"/>
    <property type="project" value="CGD"/>
</dbReference>
<dbReference type="GO" id="GO:0036170">
    <property type="term" value="P:filamentous growth of a population of unicellular organisms in response to starvation"/>
    <property type="evidence" value="ECO:0000315"/>
    <property type="project" value="CGD"/>
</dbReference>
<dbReference type="GO" id="GO:0006357">
    <property type="term" value="P:regulation of transcription by RNA polymerase II"/>
    <property type="evidence" value="ECO:0000318"/>
    <property type="project" value="GO_Central"/>
</dbReference>
<dbReference type="FunFam" id="3.30.160.60:FF:000145">
    <property type="entry name" value="Zinc finger protein 574"/>
    <property type="match status" value="1"/>
</dbReference>
<dbReference type="Gene3D" id="3.30.160.60">
    <property type="entry name" value="Classic Zinc Finger"/>
    <property type="match status" value="2"/>
</dbReference>
<dbReference type="InterPro" id="IPR051059">
    <property type="entry name" value="VerF-like"/>
</dbReference>
<dbReference type="InterPro" id="IPR036236">
    <property type="entry name" value="Znf_C2H2_sf"/>
</dbReference>
<dbReference type="InterPro" id="IPR013087">
    <property type="entry name" value="Znf_C2H2_type"/>
</dbReference>
<dbReference type="PANTHER" id="PTHR40626">
    <property type="entry name" value="MIP31509P"/>
    <property type="match status" value="1"/>
</dbReference>
<dbReference type="PANTHER" id="PTHR40626:SF28">
    <property type="entry name" value="REGULATORY PROTEIN ADR1"/>
    <property type="match status" value="1"/>
</dbReference>
<dbReference type="Pfam" id="PF00096">
    <property type="entry name" value="zf-C2H2"/>
    <property type="match status" value="2"/>
</dbReference>
<dbReference type="SMART" id="SM00355">
    <property type="entry name" value="ZnF_C2H2"/>
    <property type="match status" value="2"/>
</dbReference>
<dbReference type="SUPFAM" id="SSF57667">
    <property type="entry name" value="beta-beta-alpha zinc fingers"/>
    <property type="match status" value="1"/>
</dbReference>
<dbReference type="PROSITE" id="PS00028">
    <property type="entry name" value="ZINC_FINGER_C2H2_1"/>
    <property type="match status" value="2"/>
</dbReference>
<dbReference type="PROSITE" id="PS50157">
    <property type="entry name" value="ZINC_FINGER_C2H2_2"/>
    <property type="match status" value="2"/>
</dbReference>
<keyword id="KW-0479">Metal-binding</keyword>
<keyword id="KW-0539">Nucleus</keyword>
<keyword id="KW-1185">Reference proteome</keyword>
<keyword id="KW-0677">Repeat</keyword>
<keyword id="KW-0862">Zinc</keyword>
<keyword id="KW-0863">Zinc-finger</keyword>
<evidence type="ECO:0000250" key="1"/>
<evidence type="ECO:0000255" key="2">
    <source>
        <dbReference type="PROSITE-ProRule" id="PRU00042"/>
    </source>
</evidence>
<evidence type="ECO:0000256" key="3">
    <source>
        <dbReference type="SAM" id="MobiDB-lite"/>
    </source>
</evidence>
<evidence type="ECO:0000269" key="4">
    <source>
    </source>
</evidence>
<evidence type="ECO:0000269" key="5">
    <source>
    </source>
</evidence>
<evidence type="ECO:0000305" key="6">
    <source>
    </source>
</evidence>
<accession>Q5AF56</accession>
<accession>A0A1D8PLK2</accession>
<proteinExistence type="evidence at transcript level"/>